<organism>
    <name type="scientific">Aspergillus oryzae (strain ATCC 42149 / RIB 40)</name>
    <name type="common">Yellow koji mold</name>
    <dbReference type="NCBI Taxonomy" id="510516"/>
    <lineage>
        <taxon>Eukaryota</taxon>
        <taxon>Fungi</taxon>
        <taxon>Dikarya</taxon>
        <taxon>Ascomycota</taxon>
        <taxon>Pezizomycotina</taxon>
        <taxon>Eurotiomycetes</taxon>
        <taxon>Eurotiomycetidae</taxon>
        <taxon>Eurotiales</taxon>
        <taxon>Aspergillaceae</taxon>
        <taxon>Aspergillus</taxon>
        <taxon>Aspergillus subgen. Circumdati</taxon>
    </lineage>
</organism>
<gene>
    <name type="ORF">AO090001000135</name>
</gene>
<reference key="1">
    <citation type="journal article" date="2005" name="Nature">
        <title>Genome sequencing and analysis of Aspergillus oryzae.</title>
        <authorList>
            <person name="Machida M."/>
            <person name="Asai K."/>
            <person name="Sano M."/>
            <person name="Tanaka T."/>
            <person name="Kumagai T."/>
            <person name="Terai G."/>
            <person name="Kusumoto K."/>
            <person name="Arima T."/>
            <person name="Akita O."/>
            <person name="Kashiwagi Y."/>
            <person name="Abe K."/>
            <person name="Gomi K."/>
            <person name="Horiuchi H."/>
            <person name="Kitamoto K."/>
            <person name="Kobayashi T."/>
            <person name="Takeuchi M."/>
            <person name="Denning D.W."/>
            <person name="Galagan J.E."/>
            <person name="Nierman W.C."/>
            <person name="Yu J."/>
            <person name="Archer D.B."/>
            <person name="Bennett J.W."/>
            <person name="Bhatnagar D."/>
            <person name="Cleveland T.E."/>
            <person name="Fedorova N.D."/>
            <person name="Gotoh O."/>
            <person name="Horikawa H."/>
            <person name="Hosoyama A."/>
            <person name="Ichinomiya M."/>
            <person name="Igarashi R."/>
            <person name="Iwashita K."/>
            <person name="Juvvadi P.R."/>
            <person name="Kato M."/>
            <person name="Kato Y."/>
            <person name="Kin T."/>
            <person name="Kokubun A."/>
            <person name="Maeda H."/>
            <person name="Maeyama N."/>
            <person name="Maruyama J."/>
            <person name="Nagasaki H."/>
            <person name="Nakajima T."/>
            <person name="Oda K."/>
            <person name="Okada K."/>
            <person name="Paulsen I."/>
            <person name="Sakamoto K."/>
            <person name="Sawano T."/>
            <person name="Takahashi M."/>
            <person name="Takase K."/>
            <person name="Terabayashi Y."/>
            <person name="Wortman J.R."/>
            <person name="Yamada O."/>
            <person name="Yamagata Y."/>
            <person name="Anazawa H."/>
            <person name="Hata Y."/>
            <person name="Koide Y."/>
            <person name="Komori T."/>
            <person name="Koyama Y."/>
            <person name="Minetoki T."/>
            <person name="Suharnan S."/>
            <person name="Tanaka A."/>
            <person name="Isono K."/>
            <person name="Kuhara S."/>
            <person name="Ogasawara N."/>
            <person name="Kikuchi H."/>
        </authorList>
    </citation>
    <scope>NUCLEOTIDE SEQUENCE [LARGE SCALE GENOMIC DNA]</scope>
    <source>
        <strain>ATCC 42149 / RIB 40</strain>
    </source>
</reference>
<sequence length="353" mass="37103">MRFISVSSLLLALAPALNAVPVEVAGSAQGLDVTLSQVGNTRIKAVVKNTGSEDVTFVHLNFFKDAAPVQKVSLFRNATEVQFQGIKQRLITEGLSDDALTTLAPGATIEDEFDIASTSDLSEGGTITINSNGLVPITTDNKVTGYIPFTSNELSIDVDAAEAASVTQAVKILERRTKVTSCSGSRLSALQTALRNTVSLARAAATAAQSGSSSRFQEYFKTTSSSTRSTVAARLNAVANEAASTSSGSTTYYCSDVYGYCSSNVLAYTLPSYNIIANCDLYYSYLPALTSTCHAQDQATTTLHEFTHAPGVYSPGTDDLGYGYSAATALSASQALLNADTYALFANAVNLNC</sequence>
<protein>
    <recommendedName>
        <fullName>Neutral protease 2 homolog AO090001000135</fullName>
        <ecNumber>3.4.24.39</ecNumber>
    </recommendedName>
    <alternativeName>
        <fullName>Deuterolysin AO090001000135</fullName>
    </alternativeName>
</protein>
<proteinExistence type="inferred from homology"/>
<feature type="signal peptide" evidence="2">
    <location>
        <begin position="1"/>
        <end position="19"/>
    </location>
</feature>
<feature type="propeptide" id="PRO_0000407094" evidence="1">
    <location>
        <begin position="20"/>
        <end position="176"/>
    </location>
</feature>
<feature type="chain" id="PRO_0000407095" description="Neutral protease 2 homolog AO090001000135">
    <location>
        <begin position="177"/>
        <end position="353"/>
    </location>
</feature>
<feature type="active site" evidence="3">
    <location>
        <position position="305"/>
    </location>
</feature>
<feature type="binding site" evidence="3">
    <location>
        <position position="304"/>
    </location>
    <ligand>
        <name>Zn(2+)</name>
        <dbReference type="ChEBI" id="CHEBI:29105"/>
        <note>catalytic</note>
    </ligand>
</feature>
<feature type="binding site" evidence="3">
    <location>
        <position position="308"/>
    </location>
    <ligand>
        <name>Zn(2+)</name>
        <dbReference type="ChEBI" id="CHEBI:29105"/>
        <note>catalytic</note>
    </ligand>
</feature>
<feature type="binding site" evidence="3">
    <location>
        <position position="319"/>
    </location>
    <ligand>
        <name>Zn(2+)</name>
        <dbReference type="ChEBI" id="CHEBI:29105"/>
        <note>catalytic</note>
    </ligand>
</feature>
<feature type="disulfide bond" evidence="1">
    <location>
        <begin position="182"/>
        <end position="254"/>
    </location>
</feature>
<feature type="disulfide bond" evidence="1">
    <location>
        <begin position="261"/>
        <end position="279"/>
    </location>
</feature>
<comment type="function">
    <text evidence="1">Secreted metalloproteinase that allows assimilation of proteinaceous substrates. Shows high activities on basic nuclear substrates such as histone and protamine (By similarity).</text>
</comment>
<comment type="catalytic activity">
    <reaction>
        <text>Preferential cleavage of bonds with hydrophobic residues in P1'. Also 3-Asn-|-Gln-4 and 8-Gly-|-Ser-9 bonds in insulin B chain.</text>
        <dbReference type="EC" id="3.4.24.39"/>
    </reaction>
</comment>
<comment type="cofactor">
    <cofactor evidence="1">
        <name>Zn(2+)</name>
        <dbReference type="ChEBI" id="CHEBI:29105"/>
    </cofactor>
    <text evidence="1">Binds 1 zinc ion per subunit.</text>
</comment>
<comment type="subcellular location">
    <subcellularLocation>
        <location evidence="1">Secreted</location>
    </subcellularLocation>
</comment>
<comment type="similarity">
    <text evidence="4">Belongs to the peptidase M35 family.</text>
</comment>
<evidence type="ECO:0000250" key="1"/>
<evidence type="ECO:0000255" key="2"/>
<evidence type="ECO:0000255" key="3">
    <source>
        <dbReference type="PROSITE-ProRule" id="PRU10095"/>
    </source>
</evidence>
<evidence type="ECO:0000305" key="4"/>
<keyword id="KW-0165">Cleavage on pair of basic residues</keyword>
<keyword id="KW-1015">Disulfide bond</keyword>
<keyword id="KW-0378">Hydrolase</keyword>
<keyword id="KW-0479">Metal-binding</keyword>
<keyword id="KW-0482">Metalloprotease</keyword>
<keyword id="KW-0645">Protease</keyword>
<keyword id="KW-1185">Reference proteome</keyword>
<keyword id="KW-0964">Secreted</keyword>
<keyword id="KW-0732">Signal</keyword>
<keyword id="KW-0862">Zinc</keyword>
<keyword id="KW-0865">Zymogen</keyword>
<accession>Q2UP30</accession>
<name>NPIIA_ASPOR</name>
<dbReference type="EC" id="3.4.24.39"/>
<dbReference type="EMBL" id="BA000050">
    <property type="protein sequence ID" value="BAE56685.1"/>
    <property type="molecule type" value="Genomic_DNA"/>
</dbReference>
<dbReference type="RefSeq" id="XP_001818687.1">
    <property type="nucleotide sequence ID" value="XM_001818635.3"/>
</dbReference>
<dbReference type="SMR" id="Q2UP30"/>
<dbReference type="STRING" id="510516.Q2UP30"/>
<dbReference type="MEROPS" id="M35.001"/>
<dbReference type="EnsemblFungi" id="BAE56685">
    <property type="protein sequence ID" value="BAE56685"/>
    <property type="gene ID" value="AO090001000135"/>
</dbReference>
<dbReference type="GeneID" id="5990658"/>
<dbReference type="KEGG" id="aor:AO090001000135"/>
<dbReference type="VEuPathDB" id="FungiDB:AO090001000135"/>
<dbReference type="HOGENOM" id="CLU_039313_1_1_1"/>
<dbReference type="OMA" id="ANCDLYY"/>
<dbReference type="OrthoDB" id="105382at5052"/>
<dbReference type="BRENDA" id="3.4.24.39">
    <property type="organism ID" value="522"/>
</dbReference>
<dbReference type="Proteomes" id="UP000006564">
    <property type="component" value="Chromosome 2"/>
</dbReference>
<dbReference type="GO" id="GO:0005576">
    <property type="term" value="C:extracellular region"/>
    <property type="evidence" value="ECO:0007669"/>
    <property type="project" value="UniProtKB-SubCell"/>
</dbReference>
<dbReference type="GO" id="GO:0046872">
    <property type="term" value="F:metal ion binding"/>
    <property type="evidence" value="ECO:0007669"/>
    <property type="project" value="UniProtKB-KW"/>
</dbReference>
<dbReference type="GO" id="GO:0004222">
    <property type="term" value="F:metalloendopeptidase activity"/>
    <property type="evidence" value="ECO:0007669"/>
    <property type="project" value="InterPro"/>
</dbReference>
<dbReference type="GO" id="GO:0006508">
    <property type="term" value="P:proteolysis"/>
    <property type="evidence" value="ECO:0007669"/>
    <property type="project" value="UniProtKB-KW"/>
</dbReference>
<dbReference type="CDD" id="cd11008">
    <property type="entry name" value="M35_deuterolysin_like"/>
    <property type="match status" value="1"/>
</dbReference>
<dbReference type="Gene3D" id="2.60.40.2970">
    <property type="match status" value="1"/>
</dbReference>
<dbReference type="Gene3D" id="3.40.390.10">
    <property type="entry name" value="Collagenase (Catalytic Domain)"/>
    <property type="match status" value="1"/>
</dbReference>
<dbReference type="InterPro" id="IPR050414">
    <property type="entry name" value="Fungal_M35_metalloproteases"/>
</dbReference>
<dbReference type="InterPro" id="IPR024079">
    <property type="entry name" value="MetalloPept_cat_dom_sf"/>
</dbReference>
<dbReference type="InterPro" id="IPR001384">
    <property type="entry name" value="Peptidase_M35"/>
</dbReference>
<dbReference type="PANTHER" id="PTHR37016">
    <property type="match status" value="1"/>
</dbReference>
<dbReference type="PANTHER" id="PTHR37016:SF3">
    <property type="entry name" value="NEUTRAL PROTEASE 2-RELATED"/>
    <property type="match status" value="1"/>
</dbReference>
<dbReference type="Pfam" id="PF02102">
    <property type="entry name" value="Peptidase_M35"/>
    <property type="match status" value="1"/>
</dbReference>
<dbReference type="PRINTS" id="PR00768">
    <property type="entry name" value="DEUTEROLYSIN"/>
</dbReference>
<dbReference type="SUPFAM" id="SSF55486">
    <property type="entry name" value="Metalloproteases ('zincins'), catalytic domain"/>
    <property type="match status" value="1"/>
</dbReference>
<dbReference type="PROSITE" id="PS00142">
    <property type="entry name" value="ZINC_PROTEASE"/>
    <property type="match status" value="1"/>
</dbReference>